<dbReference type="EC" id="2.8.2.11" evidence="6"/>
<dbReference type="EMBL" id="D88667">
    <property type="protein sequence ID" value="BAA13673.1"/>
    <property type="molecule type" value="mRNA"/>
</dbReference>
<dbReference type="EMBL" id="AB029901">
    <property type="protein sequence ID" value="BAA89503.1"/>
    <property type="molecule type" value="Genomic_DNA"/>
</dbReference>
<dbReference type="EMBL" id="CR456350">
    <property type="protein sequence ID" value="CAG30236.1"/>
    <property type="molecule type" value="mRNA"/>
</dbReference>
<dbReference type="EMBL" id="BC014649">
    <property type="protein sequence ID" value="AAH14649.1"/>
    <property type="molecule type" value="mRNA"/>
</dbReference>
<dbReference type="EMBL" id="BC019077">
    <property type="protein sequence ID" value="AAH19077.1"/>
    <property type="molecule type" value="mRNA"/>
</dbReference>
<dbReference type="CCDS" id="CCDS13879.1"/>
<dbReference type="RefSeq" id="NP_001305032.1">
    <property type="nucleotide sequence ID" value="NM_001318103.2"/>
</dbReference>
<dbReference type="RefSeq" id="NP_001305033.1">
    <property type="nucleotide sequence ID" value="NM_001318104.2"/>
</dbReference>
<dbReference type="RefSeq" id="NP_001305034.1">
    <property type="nucleotide sequence ID" value="NM_001318105.2"/>
</dbReference>
<dbReference type="RefSeq" id="NP_001305035.1">
    <property type="nucleotide sequence ID" value="NM_001318106.2"/>
</dbReference>
<dbReference type="RefSeq" id="NP_001305036.1">
    <property type="nucleotide sequence ID" value="NM_001318107.1"/>
</dbReference>
<dbReference type="RefSeq" id="NP_001305037.1">
    <property type="nucleotide sequence ID" value="NM_001318108.2"/>
</dbReference>
<dbReference type="RefSeq" id="NP_001305038.1">
    <property type="nucleotide sequence ID" value="NM_001318109.1"/>
</dbReference>
<dbReference type="RefSeq" id="NP_001305039.1">
    <property type="nucleotide sequence ID" value="NM_001318110.2"/>
</dbReference>
<dbReference type="RefSeq" id="NP_001305040.1">
    <property type="nucleotide sequence ID" value="NM_001318111.2"/>
</dbReference>
<dbReference type="RefSeq" id="NP_001305041.1">
    <property type="nucleotide sequence ID" value="NM_001318112.2"/>
</dbReference>
<dbReference type="RefSeq" id="NP_001305042.1">
    <property type="nucleotide sequence ID" value="NM_001318113.2"/>
</dbReference>
<dbReference type="RefSeq" id="NP_001305043.1">
    <property type="nucleotide sequence ID" value="NM_001318114.1"/>
</dbReference>
<dbReference type="RefSeq" id="NP_001305044.1">
    <property type="nucleotide sequence ID" value="NM_001318115.2"/>
</dbReference>
<dbReference type="RefSeq" id="NP_001305045.1">
    <property type="nucleotide sequence ID" value="NM_001318116.2"/>
</dbReference>
<dbReference type="RefSeq" id="NP_004852.1">
    <property type="nucleotide sequence ID" value="NM_004861.3"/>
</dbReference>
<dbReference type="RefSeq" id="XP_016884587.1">
    <property type="nucleotide sequence ID" value="XM_017029098.1"/>
</dbReference>
<dbReference type="BioGRID" id="114891">
    <property type="interactions" value="24"/>
</dbReference>
<dbReference type="FunCoup" id="Q99999">
    <property type="interactions" value="641"/>
</dbReference>
<dbReference type="IntAct" id="Q99999">
    <property type="interactions" value="13"/>
</dbReference>
<dbReference type="MINT" id="Q99999"/>
<dbReference type="STRING" id="9606.ENSP00000385207"/>
<dbReference type="SwissLipids" id="SLP:000000746"/>
<dbReference type="GlyCosmos" id="Q99999">
    <property type="glycosylation" value="5 sites, 2 glycans"/>
</dbReference>
<dbReference type="GlyGen" id="Q99999">
    <property type="glycosylation" value="5 sites, 15 N-linked glycans (1 site), 2 O-linked glycans (3 sites)"/>
</dbReference>
<dbReference type="iPTMnet" id="Q99999"/>
<dbReference type="PhosphoSitePlus" id="Q99999"/>
<dbReference type="BioMuta" id="GAL3ST1"/>
<dbReference type="jPOST" id="Q99999"/>
<dbReference type="MassIVE" id="Q99999"/>
<dbReference type="PaxDb" id="9606-ENSP00000385735"/>
<dbReference type="PeptideAtlas" id="Q99999"/>
<dbReference type="ProteomicsDB" id="78572"/>
<dbReference type="Antibodypedia" id="243">
    <property type="antibodies" value="145 antibodies from 21 providers"/>
</dbReference>
<dbReference type="DNASU" id="9514"/>
<dbReference type="Ensembl" id="ENST00000338911.6">
    <property type="protein sequence ID" value="ENSP00000343234.5"/>
    <property type="gene ID" value="ENSG00000128242.13"/>
</dbReference>
<dbReference type="Ensembl" id="ENST00000401975.5">
    <property type="protein sequence ID" value="ENSP00000384388.1"/>
    <property type="gene ID" value="ENSG00000128242.13"/>
</dbReference>
<dbReference type="Ensembl" id="ENST00000402321.5">
    <property type="protein sequence ID" value="ENSP00000385735.1"/>
    <property type="gene ID" value="ENSG00000128242.13"/>
</dbReference>
<dbReference type="Ensembl" id="ENST00000402369.5">
    <property type="protein sequence ID" value="ENSP00000384122.1"/>
    <property type="gene ID" value="ENSG00000128242.13"/>
</dbReference>
<dbReference type="Ensembl" id="ENST00000406361.6">
    <property type="protein sequence ID" value="ENSP00000385207.1"/>
    <property type="gene ID" value="ENSG00000128242.13"/>
</dbReference>
<dbReference type="Ensembl" id="ENST00000406955.5">
    <property type="protein sequence ID" value="ENSP00000385825.1"/>
    <property type="gene ID" value="ENSG00000128242.13"/>
</dbReference>
<dbReference type="GeneID" id="9514"/>
<dbReference type="KEGG" id="hsa:9514"/>
<dbReference type="MANE-Select" id="ENST00000406361.6">
    <property type="protein sequence ID" value="ENSP00000385207.1"/>
    <property type="RefSeq nucleotide sequence ID" value="NM_001318104.2"/>
    <property type="RefSeq protein sequence ID" value="NP_001305033.1"/>
</dbReference>
<dbReference type="UCSC" id="uc003aih.2">
    <property type="organism name" value="human"/>
</dbReference>
<dbReference type="AGR" id="HGNC:24240"/>
<dbReference type="CTD" id="9514"/>
<dbReference type="DisGeNET" id="9514"/>
<dbReference type="GeneCards" id="GAL3ST1"/>
<dbReference type="HGNC" id="HGNC:24240">
    <property type="gene designation" value="GAL3ST1"/>
</dbReference>
<dbReference type="HPA" id="ENSG00000128242">
    <property type="expression patterns" value="Group enriched (brain, intestine, kidney)"/>
</dbReference>
<dbReference type="MIM" id="602300">
    <property type="type" value="gene"/>
</dbReference>
<dbReference type="neXtProt" id="NX_Q99999"/>
<dbReference type="OpenTargets" id="ENSG00000128242"/>
<dbReference type="PharmGKB" id="PA134889661"/>
<dbReference type="VEuPathDB" id="HostDB:ENSG00000128242"/>
<dbReference type="eggNOG" id="ENOG502QTXT">
    <property type="taxonomic scope" value="Eukaryota"/>
</dbReference>
<dbReference type="GeneTree" id="ENSGT00950000182923"/>
<dbReference type="HOGENOM" id="CLU_040616_1_1_1"/>
<dbReference type="InParanoid" id="Q99999"/>
<dbReference type="OMA" id="CAPKVDI"/>
<dbReference type="OrthoDB" id="514299at2759"/>
<dbReference type="PAN-GO" id="Q99999">
    <property type="GO annotations" value="3 GO annotations based on evolutionary models"/>
</dbReference>
<dbReference type="PhylomeDB" id="Q99999"/>
<dbReference type="TreeFam" id="TF314802"/>
<dbReference type="BioCyc" id="MetaCyc:HS05164-MONOMER"/>
<dbReference type="BRENDA" id="2.8.2.11">
    <property type="organism ID" value="2681"/>
</dbReference>
<dbReference type="PathwayCommons" id="Q99999"/>
<dbReference type="Reactome" id="R-HSA-9840309">
    <property type="pathway name" value="Glycosphingolipid biosynthesis"/>
</dbReference>
<dbReference type="SignaLink" id="Q99999"/>
<dbReference type="UniPathway" id="UPA00222"/>
<dbReference type="BioGRID-ORCS" id="9514">
    <property type="hits" value="17 hits in 1141 CRISPR screens"/>
</dbReference>
<dbReference type="GeneWiki" id="GAL3ST1"/>
<dbReference type="GenomeRNAi" id="9514"/>
<dbReference type="Pharos" id="Q99999">
    <property type="development level" value="Tbio"/>
</dbReference>
<dbReference type="PRO" id="PR:Q99999"/>
<dbReference type="Proteomes" id="UP000005640">
    <property type="component" value="Chromosome 22"/>
</dbReference>
<dbReference type="RNAct" id="Q99999">
    <property type="molecule type" value="protein"/>
</dbReference>
<dbReference type="Bgee" id="ENSG00000128242">
    <property type="expression patterns" value="Expressed in C1 segment of cervical spinal cord and 131 other cell types or tissues"/>
</dbReference>
<dbReference type="ExpressionAtlas" id="Q99999">
    <property type="expression patterns" value="baseline and differential"/>
</dbReference>
<dbReference type="GO" id="GO:0000139">
    <property type="term" value="C:Golgi membrane"/>
    <property type="evidence" value="ECO:0000304"/>
    <property type="project" value="Reactome"/>
</dbReference>
<dbReference type="GO" id="GO:0016020">
    <property type="term" value="C:membrane"/>
    <property type="evidence" value="ECO:0000304"/>
    <property type="project" value="ProtInc"/>
</dbReference>
<dbReference type="GO" id="GO:0005886">
    <property type="term" value="C:plasma membrane"/>
    <property type="evidence" value="ECO:0000304"/>
    <property type="project" value="ProtInc"/>
</dbReference>
<dbReference type="GO" id="GO:0001733">
    <property type="term" value="F:galactosylceramide sulfotransferase activity"/>
    <property type="evidence" value="ECO:0000314"/>
    <property type="project" value="UniProtKB"/>
</dbReference>
<dbReference type="GO" id="GO:0008146">
    <property type="term" value="F:sulfotransferase activity"/>
    <property type="evidence" value="ECO:0000304"/>
    <property type="project" value="ProtInc"/>
</dbReference>
<dbReference type="GO" id="GO:0006682">
    <property type="term" value="P:galactosylceramide biosynthetic process"/>
    <property type="evidence" value="ECO:0000318"/>
    <property type="project" value="GO_Central"/>
</dbReference>
<dbReference type="GO" id="GO:0006681">
    <property type="term" value="P:galactosylceramide metabolic process"/>
    <property type="evidence" value="ECO:0000250"/>
    <property type="project" value="UniProtKB"/>
</dbReference>
<dbReference type="GO" id="GO:0046486">
    <property type="term" value="P:glycerolipid metabolic process"/>
    <property type="evidence" value="ECO:0000314"/>
    <property type="project" value="UniProtKB"/>
</dbReference>
<dbReference type="GO" id="GO:0006688">
    <property type="term" value="P:glycosphingolipid biosynthetic process"/>
    <property type="evidence" value="ECO:0000304"/>
    <property type="project" value="Reactome"/>
</dbReference>
<dbReference type="GO" id="GO:0042552">
    <property type="term" value="P:myelination"/>
    <property type="evidence" value="ECO:0000318"/>
    <property type="project" value="GO_Central"/>
</dbReference>
<dbReference type="GO" id="GO:0006487">
    <property type="term" value="P:protein N-linked glycosylation"/>
    <property type="evidence" value="ECO:0000304"/>
    <property type="project" value="ProtInc"/>
</dbReference>
<dbReference type="GO" id="GO:0007283">
    <property type="term" value="P:spermatogenesis"/>
    <property type="evidence" value="ECO:0007669"/>
    <property type="project" value="Ensembl"/>
</dbReference>
<dbReference type="GO" id="GO:0006665">
    <property type="term" value="P:sphingolipid metabolic process"/>
    <property type="evidence" value="ECO:0000314"/>
    <property type="project" value="UniProtKB"/>
</dbReference>
<dbReference type="FunFam" id="3.40.50.300:FF:000807">
    <property type="entry name" value="galactosylceramide sulfotransferase isoform X1"/>
    <property type="match status" value="1"/>
</dbReference>
<dbReference type="Gene3D" id="3.40.50.300">
    <property type="entry name" value="P-loop containing nucleotide triphosphate hydrolases"/>
    <property type="match status" value="1"/>
</dbReference>
<dbReference type="InterPro" id="IPR009729">
    <property type="entry name" value="Gal-3-0_sulfotransfrase"/>
</dbReference>
<dbReference type="InterPro" id="IPR027417">
    <property type="entry name" value="P-loop_NTPase"/>
</dbReference>
<dbReference type="PANTHER" id="PTHR14647">
    <property type="entry name" value="GALACTOSE-3-O-SULFOTRANSFERASE"/>
    <property type="match status" value="1"/>
</dbReference>
<dbReference type="PANTHER" id="PTHR14647:SF56">
    <property type="entry name" value="GALACTOSYLCERAMIDE SULFOTRANSFERASE"/>
    <property type="match status" value="1"/>
</dbReference>
<dbReference type="Pfam" id="PF06990">
    <property type="entry name" value="Gal-3-0_sulfotr"/>
    <property type="match status" value="1"/>
</dbReference>
<dbReference type="SUPFAM" id="SSF52540">
    <property type="entry name" value="P-loop containing nucleoside triphosphate hydrolases"/>
    <property type="match status" value="1"/>
</dbReference>
<name>G3ST1_HUMAN</name>
<protein>
    <recommendedName>
        <fullName evidence="11">Galactosylceramide sulfotransferase</fullName>
        <shortName evidence="8">GalCer sulfotransferase</shortName>
        <ecNumber evidence="6">2.8.2.11</ecNumber>
    </recommendedName>
    <alternativeName>
        <fullName evidence="9">3'-phosphoadenosine-5'-phosphosulfate:GalCer sulfotransferase</fullName>
    </alternativeName>
    <alternativeName>
        <fullName evidence="10">3'-phosphoadenylylsulfate:galactosylceramide 3'-sulfotransferase</fullName>
    </alternativeName>
    <alternativeName>
        <fullName evidence="1">Cerebroside sulfotransferase</fullName>
    </alternativeName>
</protein>
<organism>
    <name type="scientific">Homo sapiens</name>
    <name type="common">Human</name>
    <dbReference type="NCBI Taxonomy" id="9606"/>
    <lineage>
        <taxon>Eukaryota</taxon>
        <taxon>Metazoa</taxon>
        <taxon>Chordata</taxon>
        <taxon>Craniata</taxon>
        <taxon>Vertebrata</taxon>
        <taxon>Euteleostomi</taxon>
        <taxon>Mammalia</taxon>
        <taxon>Eutheria</taxon>
        <taxon>Euarchontoglires</taxon>
        <taxon>Primates</taxon>
        <taxon>Haplorrhini</taxon>
        <taxon>Catarrhini</taxon>
        <taxon>Hominidae</taxon>
        <taxon>Homo</taxon>
    </lineage>
</organism>
<gene>
    <name evidence="13" type="primary">GAL3ST1</name>
    <name evidence="1" type="synonym">CST</name>
</gene>
<comment type="function">
    <text evidence="6 7">Catalyzes the transfer of a sulfate group to position 3 of non-reducing beta-galactosyl residues in glycerolipids and sphingolipids, therefore participates in the biosynthesis of sulfoglycolipids (PubMed:8830034, PubMed:9030544). Catalyzes the synthesis of galactosylceramide sulfate (sulfatide), a major lipid component of the myelin sheath and of monogalactosylalkylacylglycerol sulfate (seminolipid), present in spermatocytes (PubMed:8830034). Seems to prefer beta-glycosides at the non-reducing termini of sugar chains attached to a lipid moiety (PubMed:8830034). Also acts on lactosylceramide, galactosyl 1-alkyl-2-sn-glycerol and galactosyl diacylglycerol (in vitro) (PubMed:8830034).</text>
</comment>
<comment type="catalytic activity">
    <reaction evidence="6">
        <text>a beta-D-galactosyl-(1&lt;-&gt;1')-N-acylsphing-4-enine + 3'-phosphoadenylyl sulfate = an N-acyl-1-beta-D-(3-O-sulfo)-galactosyl-sphing-4-enine + adenosine 3',5'-bisphosphate + H(+)</text>
        <dbReference type="Rhea" id="RHEA:20613"/>
        <dbReference type="ChEBI" id="CHEBI:15378"/>
        <dbReference type="ChEBI" id="CHEBI:18390"/>
        <dbReference type="ChEBI" id="CHEBI:58339"/>
        <dbReference type="ChEBI" id="CHEBI:58343"/>
        <dbReference type="ChEBI" id="CHEBI:75956"/>
        <dbReference type="EC" id="2.8.2.11"/>
    </reaction>
    <physiologicalReaction direction="left-to-right" evidence="12">
        <dbReference type="Rhea" id="RHEA:20614"/>
    </physiologicalReaction>
</comment>
<comment type="catalytic activity">
    <reaction evidence="6">
        <text>a 1-O-alkyl-2-acyl-3-O-(beta-D-galactosyl)-sn-glycerol + 3'-phosphoadenylyl sulfate = a 1-O-alkyl-2-acyl-3-(beta-D-3-sulfogalactosyl)-sn-glycerol + adenosine 3',5'-bisphosphate + H(+)</text>
        <dbReference type="Rhea" id="RHEA:41744"/>
        <dbReference type="ChEBI" id="CHEBI:15378"/>
        <dbReference type="ChEBI" id="CHEBI:58339"/>
        <dbReference type="ChEBI" id="CHEBI:58343"/>
        <dbReference type="ChEBI" id="CHEBI:78428"/>
        <dbReference type="ChEBI" id="CHEBI:78429"/>
        <dbReference type="EC" id="2.8.2.11"/>
    </reaction>
    <physiologicalReaction direction="left-to-right" evidence="12">
        <dbReference type="Rhea" id="RHEA:41745"/>
    </physiologicalReaction>
</comment>
<comment type="catalytic activity">
    <reaction evidence="7">
        <text>a beta-D-Gal-(1&lt;-&gt;1')-ceramide + 3'-phosphoadenylyl sulfate = 1-(3-O-sulfo-beta-D-galactosyl)-ceramide + adenosine 3',5'-bisphosphate + H(+)</text>
        <dbReference type="Rhea" id="RHEA:43304"/>
        <dbReference type="ChEBI" id="CHEBI:15378"/>
        <dbReference type="ChEBI" id="CHEBI:58339"/>
        <dbReference type="ChEBI" id="CHEBI:58343"/>
        <dbReference type="ChEBI" id="CHEBI:82953"/>
        <dbReference type="ChEBI" id="CHEBI:143593"/>
    </reaction>
    <physiologicalReaction direction="left-to-right" evidence="7">
        <dbReference type="Rhea" id="RHEA:43305"/>
    </physiologicalReaction>
</comment>
<comment type="catalytic activity">
    <reaction evidence="6">
        <text>a 1,2-diacyl-3-O-(beta-D-galactosyl)-sn-glycerol + 3'-phosphoadenylyl sulfate = 1,2-diacyl-3-(3-O-sulfo-beta-D-galactosyl)-sn-glycerol + adenosine 3',5'-bisphosphate + H(+)</text>
        <dbReference type="Rhea" id="RHEA:41748"/>
        <dbReference type="ChEBI" id="CHEBI:15378"/>
        <dbReference type="ChEBI" id="CHEBI:17615"/>
        <dbReference type="ChEBI" id="CHEBI:58339"/>
        <dbReference type="ChEBI" id="CHEBI:58343"/>
        <dbReference type="ChEBI" id="CHEBI:157618"/>
    </reaction>
    <physiologicalReaction direction="left-to-right" evidence="12">
        <dbReference type="Rhea" id="RHEA:41749"/>
    </physiologicalReaction>
</comment>
<comment type="catalytic activity">
    <reaction evidence="6">
        <text>a beta-D-Gal-(1-&gt;4)-beta-D-Glc-(1&lt;-&gt;1)-Cer(d18:1(4E)) + 3'-phosphoadenylyl sulfate = beta-D-3-sulfogalactosyl-(1-&gt;4)-beta-D-glucosyl-(1&lt;-&gt;1')-N-acylsphing-4-enine + adenosine 3',5'-bisphosphate + H(+)</text>
        <dbReference type="Rhea" id="RHEA:41736"/>
        <dbReference type="ChEBI" id="CHEBI:15378"/>
        <dbReference type="ChEBI" id="CHEBI:17950"/>
        <dbReference type="ChEBI" id="CHEBI:58339"/>
        <dbReference type="ChEBI" id="CHEBI:58343"/>
        <dbReference type="ChEBI" id="CHEBI:78426"/>
    </reaction>
    <physiologicalReaction direction="left-to-right" evidence="12">
        <dbReference type="Rhea" id="RHEA:41737"/>
    </physiologicalReaction>
</comment>
<comment type="pathway">
    <text evidence="6">Lipid metabolism; sphingolipid metabolism.</text>
</comment>
<comment type="subcellular location">
    <subcellularLocation>
        <location evidence="11">Golgi apparatus membrane</location>
        <topology evidence="11">Single-pass type II membrane protein</topology>
    </subcellularLocation>
</comment>
<comment type="tissue specificity">
    <text evidence="3 6 7">Expressed in kidney proximal tubule, gastric mucosa and adenocarcinoma (PubMed:10785389, PubMed:9030544). Highly expressed in renal cell carcinoma cell lines (PubMed:8830034, PubMed:9030544).</text>
</comment>
<comment type="similarity">
    <text evidence="11">Belongs to the galactose-3-O-sulfotransferase family.</text>
</comment>
<proteinExistence type="evidence at protein level"/>
<accession>Q99999</accession>
<accession>Q96C63</accession>
<evidence type="ECO:0000250" key="1">
    <source>
        <dbReference type="UniProtKB" id="Q9JHE4"/>
    </source>
</evidence>
<evidence type="ECO:0000255" key="2"/>
<evidence type="ECO:0000269" key="3">
    <source>
    </source>
</evidence>
<evidence type="ECO:0000269" key="4">
    <source>
    </source>
</evidence>
<evidence type="ECO:0000269" key="5">
    <source>
    </source>
</evidence>
<evidence type="ECO:0000269" key="6">
    <source>
    </source>
</evidence>
<evidence type="ECO:0000269" key="7">
    <source>
    </source>
</evidence>
<evidence type="ECO:0000303" key="8">
    <source>
    </source>
</evidence>
<evidence type="ECO:0000303" key="9">
    <source>
    </source>
</evidence>
<evidence type="ECO:0000303" key="10">
    <source>
    </source>
</evidence>
<evidence type="ECO:0000305" key="11"/>
<evidence type="ECO:0000305" key="12">
    <source>
    </source>
</evidence>
<evidence type="ECO:0000312" key="13">
    <source>
        <dbReference type="HGNC" id="HGNC:24240"/>
    </source>
</evidence>
<sequence>MLPPQKKPWESMAKGLVLGALFTSFLLLVYSYAVPPLHAGLASTTPEAAASCSPPALEPEAVIRANGSAGECQPRRNIVFLKTHKTASSTLLNILFRFGQKHRLKFAFPNGRNDFDYPTFFARSLVQDYRPGACFNIICNHMRFHYDEVRGLVPTNAIFITVLRDPARLFESSFHYFGPVVPLTWKLSAGDKLTEFLQDPDRYYDPNGFNAHYLRNLLFFDLGYDNSLDPSSPQVQEHILEVERRFHLVLLQEYFDESLVLLKDLLCWELEDVLYFKLNARRDSPVPRLSGELYGRATAWNMLDSHLYRHFNASFWRKVEAFGRERMAREVAALRHANERMRTICIDGGHAVDAAAIQDEAMQPWQPLGTKSILGYNLKKSIGQRHAQLCRRMLTPEIQYLMDLGANLWVTKLWKFIRDFLRW</sequence>
<keyword id="KW-0903">Direct protein sequencing</keyword>
<keyword id="KW-0325">Glycoprotein</keyword>
<keyword id="KW-0333">Golgi apparatus</keyword>
<keyword id="KW-0443">Lipid metabolism</keyword>
<keyword id="KW-0472">Membrane</keyword>
<keyword id="KW-1267">Proteomics identification</keyword>
<keyword id="KW-1185">Reference proteome</keyword>
<keyword id="KW-0735">Signal-anchor</keyword>
<keyword id="KW-0746">Sphingolipid metabolism</keyword>
<keyword id="KW-0808">Transferase</keyword>
<keyword id="KW-0812">Transmembrane</keyword>
<keyword id="KW-1133">Transmembrane helix</keyword>
<reference key="1">
    <citation type="journal article" date="1997" name="J. Biol. Chem.">
        <title>Molecular cloning and expression of cDNA encoding human 3'-phosphoadenylylsulfate:galactosylceramide 3'-sulfotransferase.</title>
        <authorList>
            <person name="Honke K."/>
            <person name="Tsuda M."/>
            <person name="Hirahara Y."/>
            <person name="Ishii A."/>
            <person name="Makita A."/>
            <person name="Wada Y."/>
        </authorList>
    </citation>
    <scope>NUCLEOTIDE SEQUENCE [MRNA]</scope>
    <scope>PROTEIN SEQUENCE OF 7-14; 86-101; 102-105; 187-192; 278-286; 372-379 AND 416-423</scope>
    <scope>CATALYTIC ACTIVITY</scope>
    <scope>FUNCTION</scope>
    <scope>TISSUE SPECIFICITY</scope>
    <source>
        <tissue>Renal cell carcinoma</tissue>
    </source>
</reference>
<reference key="2">
    <citation type="journal article" date="2000" name="Eur. J. Biochem.">
        <title>Cancer-associated alternative usage of multiple promoters of human GalCer sulfotransferase gene.</title>
        <authorList>
            <person name="Tsuda M."/>
            <person name="Egashira M."/>
            <person name="Niikawa N."/>
            <person name="Wada Y."/>
            <person name="Honke K."/>
        </authorList>
    </citation>
    <scope>NUCLEOTIDE SEQUENCE [GENOMIC DNA]</scope>
    <scope>TISSUE SPECIFICITY</scope>
    <source>
        <tissue>Kidney proximal tubule</tissue>
    </source>
</reference>
<reference key="3">
    <citation type="journal article" date="2004" name="Genome Biol.">
        <title>A genome annotation-driven approach to cloning the human ORFeome.</title>
        <authorList>
            <person name="Collins J.E."/>
            <person name="Wright C.L."/>
            <person name="Edwards C.A."/>
            <person name="Davis M.P."/>
            <person name="Grinham J.A."/>
            <person name="Cole C.G."/>
            <person name="Goward M.E."/>
            <person name="Aguado B."/>
            <person name="Mallya M."/>
            <person name="Mokrab Y."/>
            <person name="Huckle E.J."/>
            <person name="Beare D.M."/>
            <person name="Dunham I."/>
        </authorList>
    </citation>
    <scope>NUCLEOTIDE SEQUENCE [LARGE SCALE MRNA]</scope>
    <scope>VARIANT MET-29</scope>
</reference>
<reference key="4">
    <citation type="journal article" date="2004" name="Genome Res.">
        <title>The status, quality, and expansion of the NIH full-length cDNA project: the Mammalian Gene Collection (MGC).</title>
        <authorList>
            <consortium name="The MGC Project Team"/>
        </authorList>
    </citation>
    <scope>NUCLEOTIDE SEQUENCE [LARGE SCALE MRNA]</scope>
    <scope>VARIANT MET-29</scope>
    <source>
        <tissue>Kidney</tissue>
    </source>
</reference>
<reference key="5">
    <citation type="journal article" date="1996" name="J. Biochem.">
        <title>Purification and characterization of 3'-phosphoadenosine-5'-phosphosulfate:GalCer sulfotransferase from human renal cancer cells.</title>
        <authorList>
            <person name="Honke K."/>
            <person name="Yamane M."/>
            <person name="Ishii A."/>
            <person name="Kobayashi T."/>
            <person name="Makita A."/>
        </authorList>
    </citation>
    <scope>FUNCTION</scope>
    <scope>CATALYTIC ACTIVITY</scope>
    <scope>TISSUE SPECIFICITY</scope>
</reference>
<feature type="chain" id="PRO_0000085201" description="Galactosylceramide sulfotransferase">
    <location>
        <begin position="1"/>
        <end position="423"/>
    </location>
</feature>
<feature type="topological domain" description="Cytoplasmic" evidence="2">
    <location>
        <begin position="1"/>
        <end position="14"/>
    </location>
</feature>
<feature type="transmembrane region" description="Helical; Signal-anchor for type II membrane protein" evidence="2">
    <location>
        <begin position="15"/>
        <end position="35"/>
    </location>
</feature>
<feature type="topological domain" description="Lumenal" evidence="2">
    <location>
        <begin position="36"/>
        <end position="423"/>
    </location>
</feature>
<feature type="glycosylation site" description="N-linked (GlcNAc...) asparagine" evidence="2">
    <location>
        <position position="66"/>
    </location>
</feature>
<feature type="glycosylation site" description="N-linked (GlcNAc...) asparagine" evidence="2">
    <location>
        <position position="312"/>
    </location>
</feature>
<feature type="sequence variant" id="VAR_013684" description="In dbSNP:rs2267161." evidence="4 5">
    <original>V</original>
    <variation>M</variation>
    <location>
        <position position="29"/>
    </location>
</feature>
<feature type="sequence conflict" description="In Ref. 1; AA sequence." evidence="11" ref="1">
    <original>RR</original>
    <variation>LN</variation>
    <location>
        <begin position="281"/>
        <end position="282"/>
    </location>
</feature>
<feature type="sequence conflict" description="In Ref. 1; AA sequence." evidence="11" ref="1">
    <original>R</original>
    <variation>L</variation>
    <location>
        <position position="418"/>
    </location>
</feature>
<feature type="sequence conflict" description="In Ref. 1; AA sequence." evidence="11" ref="1">
    <original>R</original>
    <variation>E</variation>
    <location>
        <position position="422"/>
    </location>
</feature>